<sequence length="162" mass="17833">MKRGVATLPVILVILLSVAAGAGAWLLVRGHGPQQPEISAYSHGHLTRVGPYLYCNVVDLDDCQTPQAQGELPVSERYPVQLSVPEVISRAPWRLLQVYQDPANTTSTLFRPDTRLAVTIPTVDPQRGRLTGIVVQLLTLVVDHSGELRDVPHAEWSVRLIF</sequence>
<reference key="1">
    <citation type="journal article" date="2002" name="J. Bacteriol.">
        <title>Whole-genome comparison of Mycobacterium tuberculosis clinical and laboratory strains.</title>
        <authorList>
            <person name="Fleischmann R.D."/>
            <person name="Alland D."/>
            <person name="Eisen J.A."/>
            <person name="Carpenter L."/>
            <person name="White O."/>
            <person name="Peterson J.D."/>
            <person name="DeBoy R.T."/>
            <person name="Dodson R.J."/>
            <person name="Gwinn M.L."/>
            <person name="Haft D.H."/>
            <person name="Hickey E.K."/>
            <person name="Kolonay J.F."/>
            <person name="Nelson W.C."/>
            <person name="Umayam L.A."/>
            <person name="Ermolaeva M.D."/>
            <person name="Salzberg S.L."/>
            <person name="Delcher A."/>
            <person name="Utterback T.R."/>
            <person name="Weidman J.F."/>
            <person name="Khouri H.M."/>
            <person name="Gill J."/>
            <person name="Mikula A."/>
            <person name="Bishai W."/>
            <person name="Jacobs W.R. Jr."/>
            <person name="Venter J.C."/>
            <person name="Fraser C.M."/>
        </authorList>
    </citation>
    <scope>NUCLEOTIDE SEQUENCE [LARGE SCALE GENOMIC DNA]</scope>
    <source>
        <strain>CDC 1551 / Oshkosh</strain>
    </source>
</reference>
<gene>
    <name type="ordered locus">MT0898</name>
</gene>
<dbReference type="EMBL" id="AE000516">
    <property type="protein sequence ID" value="AAK45140.1"/>
    <property type="molecule type" value="Genomic_DNA"/>
</dbReference>
<dbReference type="PIR" id="H70779">
    <property type="entry name" value="H70779"/>
</dbReference>
<dbReference type="RefSeq" id="WP_003404591.1">
    <property type="nucleotide sequence ID" value="NZ_KK341227.1"/>
</dbReference>
<dbReference type="KEGG" id="mtc:MT0898"/>
<dbReference type="PATRIC" id="fig|83331.31.peg.964"/>
<dbReference type="HOGENOM" id="CLU_111048_1_1_11"/>
<dbReference type="Proteomes" id="UP000001020">
    <property type="component" value="Chromosome"/>
</dbReference>
<dbReference type="InterPro" id="IPR024495">
    <property type="entry name" value="DUF2771"/>
</dbReference>
<dbReference type="Pfam" id="PF10969">
    <property type="entry name" value="DUF2771"/>
    <property type="match status" value="1"/>
</dbReference>
<protein>
    <recommendedName>
        <fullName>Uncharacterized protein MT0898</fullName>
    </recommendedName>
</protein>
<evidence type="ECO:0000255" key="1"/>
<name>Y875_MYCTO</name>
<proteinExistence type="inferred from homology"/>
<organism>
    <name type="scientific">Mycobacterium tuberculosis (strain CDC 1551 / Oshkosh)</name>
    <dbReference type="NCBI Taxonomy" id="83331"/>
    <lineage>
        <taxon>Bacteria</taxon>
        <taxon>Bacillati</taxon>
        <taxon>Actinomycetota</taxon>
        <taxon>Actinomycetes</taxon>
        <taxon>Mycobacteriales</taxon>
        <taxon>Mycobacteriaceae</taxon>
        <taxon>Mycobacterium</taxon>
        <taxon>Mycobacterium tuberculosis complex</taxon>
    </lineage>
</organism>
<accession>P9WKR6</accession>
<accession>L0T7S3</accession>
<accession>P64731</accession>
<accession>Q10537</accession>
<keyword id="KW-1185">Reference proteome</keyword>
<keyword id="KW-0732">Signal</keyword>
<feature type="signal peptide" evidence="1">
    <location>
        <begin position="1"/>
        <end position="24"/>
    </location>
</feature>
<feature type="chain" id="PRO_0000427607" description="Uncharacterized protein MT0898">
    <location>
        <begin position="25"/>
        <end position="162"/>
    </location>
</feature>